<gene>
    <name type="primary">HSFX1</name>
    <name type="synonym">LW-1</name>
</gene>
<gene>
    <name type="primary">HSFX2</name>
</gene>
<keyword id="KW-0963">Cytoplasm</keyword>
<keyword id="KW-0238">DNA-binding</keyword>
<keyword id="KW-1017">Isopeptide bond</keyword>
<keyword id="KW-0539">Nucleus</keyword>
<keyword id="KW-1267">Proteomics identification</keyword>
<keyword id="KW-1185">Reference proteome</keyword>
<keyword id="KW-0804">Transcription</keyword>
<keyword id="KW-0805">Transcription regulation</keyword>
<keyword id="KW-0832">Ubl conjugation</keyword>
<organism>
    <name type="scientific">Homo sapiens</name>
    <name type="common">Human</name>
    <dbReference type="NCBI Taxonomy" id="9606"/>
    <lineage>
        <taxon>Eukaryota</taxon>
        <taxon>Metazoa</taxon>
        <taxon>Chordata</taxon>
        <taxon>Craniata</taxon>
        <taxon>Vertebrata</taxon>
        <taxon>Euteleostomi</taxon>
        <taxon>Mammalia</taxon>
        <taxon>Eutheria</taxon>
        <taxon>Euarchontoglires</taxon>
        <taxon>Primates</taxon>
        <taxon>Haplorrhini</taxon>
        <taxon>Catarrhini</taxon>
        <taxon>Hominidae</taxon>
        <taxon>Homo</taxon>
    </lineage>
</organism>
<evidence type="ECO:0000250" key="1"/>
<evidence type="ECO:0000256" key="2">
    <source>
        <dbReference type="SAM" id="MobiDB-lite"/>
    </source>
</evidence>
<evidence type="ECO:0000269" key="3">
    <source>
    </source>
</evidence>
<evidence type="ECO:0000305" key="4"/>
<proteinExistence type="evidence at protein level"/>
<sequence length="423" mass="46742">MEDKRSLSMARCEERNSRGQDHGLERVPFPPQLQSETYLHPADPSPAWDDPGSTGSPNLRLLTEEIAFQPLAEEASFRRPHPDGDVPPQGEDNLLSLPFPQKLWRLVSSNQFSSIWWDDSGACRVINQKLFEKEILKRDVAHKVFATTSIKSFFRQLNLYGFRKRRQCTFRTFTRIFSAKRLVSILNKLEFYCHPYFQRDSPHLLVRMKRRVGVKSAPRHQEEDKPEAAGSCLAPADTEQQDHTSPNENDQVTPQHREPAGPNTQIRSGSAPPATPVMVPDSAVASDNSPVTQPAGEWSEGSQAHVTPVAAVPGPAALPFLYVPGSPTQMNSYGPVVALPTASRSTLAMDTTGLPAPGMLPFCHLWVPVTLVAAGAAQPAASMVMFPHLPALHHHCPHSHRTSQYMPASDGPQAYPDYADQST</sequence>
<dbReference type="EMBL" id="AF139980">
    <property type="protein sequence ID" value="AAD45879.1"/>
    <property type="molecule type" value="mRNA"/>
</dbReference>
<dbReference type="EMBL" id="AF139982">
    <property type="protein sequence ID" value="AAD45880.1"/>
    <property type="molecule type" value="Genomic_DNA"/>
</dbReference>
<dbReference type="EMBL" id="AF139981">
    <property type="protein sequence ID" value="AAD45880.1"/>
    <property type="status" value="JOINED"/>
    <property type="molecule type" value="Genomic_DNA"/>
</dbReference>
<dbReference type="EMBL" id="CH471169">
    <property type="protein sequence ID" value="EAW99371.1"/>
    <property type="molecule type" value="Genomic_DNA"/>
</dbReference>
<dbReference type="EMBL" id="BC021706">
    <property type="protein sequence ID" value="AAH21706.1"/>
    <property type="molecule type" value="mRNA"/>
</dbReference>
<dbReference type="CCDS" id="CCDS44011.1"/>
<dbReference type="CCDS" id="CCDS48179.1"/>
<dbReference type="RefSeq" id="NP_001157887.1">
    <property type="nucleotide sequence ID" value="NM_001164415.2"/>
</dbReference>
<dbReference type="RefSeq" id="NP_057237.1">
    <property type="nucleotide sequence ID" value="NM_016153.3"/>
</dbReference>
<dbReference type="SMR" id="Q9UBD0"/>
<dbReference type="BioGRID" id="325062">
    <property type="interactions" value="25"/>
</dbReference>
<dbReference type="BioGRID" id="576546">
    <property type="interactions" value="9"/>
</dbReference>
<dbReference type="FunCoup" id="Q9UBD0">
    <property type="interactions" value="6"/>
</dbReference>
<dbReference type="IntAct" id="Q9UBD0">
    <property type="interactions" value="16"/>
</dbReference>
<dbReference type="STRING" id="9606.ENSP00000359444"/>
<dbReference type="GlyGen" id="Q9UBD0">
    <property type="glycosylation" value="2 sites, 1 O-linked glycan (1 site)"/>
</dbReference>
<dbReference type="iPTMnet" id="Q9UBD0"/>
<dbReference type="PhosphoSitePlus" id="Q9UBD0"/>
<dbReference type="BioMuta" id="HSFX1"/>
<dbReference type="DMDM" id="74761890"/>
<dbReference type="MassIVE" id="Q9UBD0"/>
<dbReference type="PaxDb" id="9606-ENSP00000359444"/>
<dbReference type="PeptideAtlas" id="Q9UBD0"/>
<dbReference type="Antibodypedia" id="56729">
    <property type="antibodies" value="152 antibodies from 20 providers"/>
</dbReference>
<dbReference type="Antibodypedia" id="76028">
    <property type="antibodies" value="36 antibodies from 11 providers"/>
</dbReference>
<dbReference type="DNASU" id="100130086"/>
<dbReference type="Ensembl" id="ENST00000370416.4">
    <property type="protein sequence ID" value="ENSP00000359444.4"/>
    <property type="gene ID" value="ENSG00000171116.7"/>
</dbReference>
<dbReference type="Ensembl" id="ENST00000598963.3">
    <property type="protein sequence ID" value="ENSP00000469223.1"/>
    <property type="gene ID" value="ENSG00000268738.3"/>
</dbReference>
<dbReference type="GeneID" id="100130086"/>
<dbReference type="GeneID" id="100506164"/>
<dbReference type="KEGG" id="hsa:100130086"/>
<dbReference type="KEGG" id="hsa:100506164"/>
<dbReference type="MANE-Select" id="ENST00000370416.4">
    <property type="protein sequence ID" value="ENSP00000359444.4"/>
    <property type="RefSeq nucleotide sequence ID" value="NM_016153.3"/>
    <property type="RefSeq protein sequence ID" value="NP_057237.1"/>
</dbReference>
<dbReference type="MANE-Select" id="ENST00000598963.3">
    <property type="protein sequence ID" value="ENSP00000469223.1"/>
    <property type="RefSeq nucleotide sequence ID" value="NM_001164415.3"/>
    <property type="RefSeq protein sequence ID" value="NP_001157887.1"/>
</dbReference>
<dbReference type="UCSC" id="uc022cgk.2">
    <property type="organism name" value="human"/>
</dbReference>
<dbReference type="AGR" id="HGNC:29603"/>
<dbReference type="AGR" id="HGNC:32701"/>
<dbReference type="CTD" id="100130086"/>
<dbReference type="CTD" id="100506164"/>
<dbReference type="DisGeNET" id="100130086"/>
<dbReference type="DisGeNET" id="100506164"/>
<dbReference type="GeneCards" id="HSFX1"/>
<dbReference type="GeneCards" id="HSFX2"/>
<dbReference type="HGNC" id="HGNC:29603">
    <property type="gene designation" value="HSFX1"/>
</dbReference>
<dbReference type="HGNC" id="HGNC:32701">
    <property type="gene designation" value="HSFX2"/>
</dbReference>
<dbReference type="HPA" id="ENSG00000171116">
    <property type="expression patterns" value="Low tissue specificity"/>
</dbReference>
<dbReference type="HPA" id="ENSG00000268738">
    <property type="expression patterns" value="Tissue enriched (testis)"/>
</dbReference>
<dbReference type="neXtProt" id="NX_Q9UBD0"/>
<dbReference type="OpenTargets" id="ENSG00000171116"/>
<dbReference type="PharmGKB" id="PA145008220"/>
<dbReference type="VEuPathDB" id="HostDB:ENSG00000171116"/>
<dbReference type="VEuPathDB" id="HostDB:ENSG00000268738"/>
<dbReference type="eggNOG" id="KOG0627">
    <property type="taxonomic scope" value="Eukaryota"/>
</dbReference>
<dbReference type="GeneTree" id="ENSGT00940000163633"/>
<dbReference type="HOGENOM" id="CLU_053156_1_0_1"/>
<dbReference type="InParanoid" id="Q9UBD0"/>
<dbReference type="OMA" id="FASIWWD"/>
<dbReference type="OrthoDB" id="9536616at2759"/>
<dbReference type="PAN-GO" id="Q9UBD0">
    <property type="GO annotations" value="4 GO annotations based on evolutionary models"/>
</dbReference>
<dbReference type="PhylomeDB" id="Q9UBD0"/>
<dbReference type="TreeFam" id="TF330401"/>
<dbReference type="PathwayCommons" id="Q9UBD0"/>
<dbReference type="SignaLink" id="Q9UBD0"/>
<dbReference type="BioGRID-ORCS" id="100130086">
    <property type="hits" value="6 hits in 631 CRISPR screens"/>
</dbReference>
<dbReference type="BioGRID-ORCS" id="100506164">
    <property type="hits" value="10 hits in 656 CRISPR screens"/>
</dbReference>
<dbReference type="Pharos" id="Q9UBD0">
    <property type="development level" value="Tbio"/>
</dbReference>
<dbReference type="PRO" id="PR:Q9UBD0"/>
<dbReference type="Proteomes" id="UP000005640">
    <property type="component" value="Chromosome X"/>
</dbReference>
<dbReference type="RNAct" id="Q9UBD0">
    <property type="molecule type" value="protein"/>
</dbReference>
<dbReference type="Bgee" id="ENSG00000171116">
    <property type="expression patterns" value="Expressed in primordial germ cell in gonad and 90 other cell types or tissues"/>
</dbReference>
<dbReference type="ExpressionAtlas" id="Q9UBD0">
    <property type="expression patterns" value="baseline and differential"/>
</dbReference>
<dbReference type="GO" id="GO:0000785">
    <property type="term" value="C:chromatin"/>
    <property type="evidence" value="ECO:0000247"/>
    <property type="project" value="NTNU_SB"/>
</dbReference>
<dbReference type="GO" id="GO:0005737">
    <property type="term" value="C:cytoplasm"/>
    <property type="evidence" value="ECO:0007669"/>
    <property type="project" value="UniProtKB-SubCell"/>
</dbReference>
<dbReference type="GO" id="GO:0005634">
    <property type="term" value="C:nucleus"/>
    <property type="evidence" value="ECO:0000314"/>
    <property type="project" value="LIFEdb"/>
</dbReference>
<dbReference type="GO" id="GO:0000981">
    <property type="term" value="F:DNA-binding transcription factor activity, RNA polymerase II-specific"/>
    <property type="evidence" value="ECO:0000247"/>
    <property type="project" value="NTNU_SB"/>
</dbReference>
<dbReference type="GO" id="GO:0043565">
    <property type="term" value="F:sequence-specific DNA binding"/>
    <property type="evidence" value="ECO:0007669"/>
    <property type="project" value="InterPro"/>
</dbReference>
<dbReference type="FunFam" id="1.10.10.10:FF:000349">
    <property type="entry name" value="Heat shock transcription factor, Y-linked"/>
    <property type="match status" value="1"/>
</dbReference>
<dbReference type="Gene3D" id="1.10.10.10">
    <property type="entry name" value="Winged helix-like DNA-binding domain superfamily/Winged helix DNA-binding domain"/>
    <property type="match status" value="1"/>
</dbReference>
<dbReference type="InterPro" id="IPR000232">
    <property type="entry name" value="HSF_DNA-bd"/>
</dbReference>
<dbReference type="InterPro" id="IPR036388">
    <property type="entry name" value="WH-like_DNA-bd_sf"/>
</dbReference>
<dbReference type="InterPro" id="IPR036390">
    <property type="entry name" value="WH_DNA-bd_sf"/>
</dbReference>
<dbReference type="PANTHER" id="PTHR10015">
    <property type="entry name" value="HEAT SHOCK TRANSCRIPTION FACTOR"/>
    <property type="match status" value="1"/>
</dbReference>
<dbReference type="PANTHER" id="PTHR10015:SF282">
    <property type="entry name" value="HEAT SHOCK TRANSCRIPTION FACTOR, X-LINKED"/>
    <property type="match status" value="1"/>
</dbReference>
<dbReference type="Pfam" id="PF00447">
    <property type="entry name" value="HSF_DNA-bind"/>
    <property type="match status" value="1"/>
</dbReference>
<dbReference type="SMART" id="SM00415">
    <property type="entry name" value="HSF"/>
    <property type="match status" value="1"/>
</dbReference>
<dbReference type="SUPFAM" id="SSF46785">
    <property type="entry name" value="Winged helix' DNA-binding domain"/>
    <property type="match status" value="1"/>
</dbReference>
<comment type="interaction">
    <interactant intactId="EBI-947253">
        <id>Q9UBD0</id>
    </interactant>
    <interactant intactId="EBI-11522760">
        <id>Q6RW13-2</id>
        <label>AGTRAP</label>
    </interactant>
    <organismsDiffer>false</organismsDiffer>
    <experiments>3</experiments>
</comment>
<comment type="interaction">
    <interactant intactId="EBI-947253">
        <id>Q9UBD0</id>
    </interactant>
    <interactant intactId="EBI-930964">
        <id>P54253</id>
        <label>ATXN1</label>
    </interactant>
    <organismsDiffer>false</organismsDiffer>
    <experiments>6</experiments>
</comment>
<comment type="interaction">
    <interactant intactId="EBI-947253">
        <id>Q9UBD0</id>
    </interactant>
    <interactant intactId="EBI-8652492">
        <id>Q9UGQ2</id>
        <label>CACFD1</label>
    </interactant>
    <organismsDiffer>false</organismsDiffer>
    <experiments>3</experiments>
</comment>
<comment type="interaction">
    <interactant intactId="EBI-947253">
        <id>Q9UBD0</id>
    </interactant>
    <interactant intactId="EBI-10176379">
        <id>P59991</id>
        <label>KRTAP12-2</label>
    </interactant>
    <organismsDiffer>false</organismsDiffer>
    <experiments>3</experiments>
</comment>
<comment type="interaction">
    <interactant intactId="EBI-947253">
        <id>Q9UBD0</id>
    </interactant>
    <interactant intactId="EBI-944295">
        <id>Q969L2</id>
        <label>MAL2</label>
    </interactant>
    <organismsDiffer>false</organismsDiffer>
    <experiments>3</experiments>
</comment>
<comment type="interaction">
    <interactant intactId="EBI-947253">
        <id>Q9UBD0</id>
    </interactant>
    <interactant intactId="EBI-1053887">
        <id>Q5XKP0</id>
        <label>MICOS13</label>
    </interactant>
    <organismsDiffer>false</organismsDiffer>
    <experiments>3</experiments>
</comment>
<comment type="interaction">
    <interactant intactId="EBI-947253">
        <id>Q9UBD0</id>
    </interactant>
    <interactant intactId="EBI-3923617">
        <id>Q9H2K0</id>
        <label>MTIF3</label>
    </interactant>
    <organismsDiffer>false</organismsDiffer>
    <experiments>3</experiments>
</comment>
<comment type="interaction">
    <interactant intactId="EBI-947253">
        <id>Q9UBD0</id>
    </interactant>
    <interactant intactId="EBI-3923480">
        <id>Q8N3Y7</id>
        <label>SDR16C5</label>
    </interactant>
    <organismsDiffer>false</organismsDiffer>
    <experiments>3</experiments>
</comment>
<comment type="interaction">
    <interactant intactId="EBI-947253">
        <id>Q9UBD0</id>
    </interactant>
    <interactant intactId="EBI-9071725">
        <id>P08247</id>
        <label>SYP</label>
    </interactant>
    <organismsDiffer>false</organismsDiffer>
    <experiments>3</experiments>
</comment>
<comment type="subcellular location">
    <subcellularLocation>
        <location evidence="4">Nucleus</location>
    </subcellularLocation>
    <subcellularLocation>
        <location evidence="3">Cytoplasm</location>
    </subcellularLocation>
</comment>
<comment type="tissue specificity">
    <text evidence="3">Testis-specific.</text>
</comment>
<comment type="similarity">
    <text evidence="4">Belongs to the HSF family.</text>
</comment>
<feature type="chain" id="PRO_0000339188" description="Heat shock transcription factor, X-linked">
    <location>
        <begin position="1"/>
        <end position="423"/>
    </location>
</feature>
<feature type="DNA-binding region" evidence="1">
    <location>
        <begin position="98"/>
        <end position="282"/>
    </location>
</feature>
<feature type="region of interest" description="Disordered" evidence="2">
    <location>
        <begin position="1"/>
        <end position="56"/>
    </location>
</feature>
<feature type="region of interest" description="Disordered" evidence="2">
    <location>
        <begin position="215"/>
        <end position="303"/>
    </location>
</feature>
<feature type="region of interest" description="Disordered" evidence="2">
    <location>
        <begin position="397"/>
        <end position="423"/>
    </location>
</feature>
<feature type="compositionally biased region" description="Basic and acidic residues" evidence="2">
    <location>
        <begin position="1"/>
        <end position="25"/>
    </location>
</feature>
<feature type="compositionally biased region" description="Polar residues" evidence="2">
    <location>
        <begin position="243"/>
        <end position="254"/>
    </location>
</feature>
<feature type="cross-link" description="Glycyl lysine isopeptide (Lys-Gly) (interchain with G-Cter in SUMO1)">
    <location>
        <position position="215"/>
    </location>
</feature>
<name>HSFX1_HUMAN</name>
<accession>Q9UBD0</accession>
<protein>
    <recommendedName>
        <fullName>Heat shock transcription factor, X-linked</fullName>
    </recommendedName>
</protein>
<reference key="1">
    <citation type="submission" date="1999-04" db="EMBL/GenBank/DDBJ databases">
        <title>Expression of a testis-specific gene LW-1 in cancers.</title>
        <authorList>
            <person name="Wang L."/>
            <person name="Thibodeau S.N."/>
        </authorList>
    </citation>
    <scope>NUCLEOTIDE SEQUENCE [GENOMIC DNA / MRNA]</scope>
    <source>
        <tissue>Testis</tissue>
    </source>
</reference>
<reference key="2">
    <citation type="submission" date="2005-07" db="EMBL/GenBank/DDBJ databases">
        <authorList>
            <person name="Mural R.J."/>
            <person name="Istrail S."/>
            <person name="Sutton G.G."/>
            <person name="Florea L."/>
            <person name="Halpern A.L."/>
            <person name="Mobarry C.M."/>
            <person name="Lippert R."/>
            <person name="Walenz B."/>
            <person name="Shatkay H."/>
            <person name="Dew I."/>
            <person name="Miller J.R."/>
            <person name="Flanigan M.J."/>
            <person name="Edwards N.J."/>
            <person name="Bolanos R."/>
            <person name="Fasulo D."/>
            <person name="Halldorsson B.V."/>
            <person name="Hannenhalli S."/>
            <person name="Turner R."/>
            <person name="Yooseph S."/>
            <person name="Lu F."/>
            <person name="Nusskern D.R."/>
            <person name="Shue B.C."/>
            <person name="Zheng X.H."/>
            <person name="Zhong F."/>
            <person name="Delcher A.L."/>
            <person name="Huson D.H."/>
            <person name="Kravitz S.A."/>
            <person name="Mouchard L."/>
            <person name="Reinert K."/>
            <person name="Remington K.A."/>
            <person name="Clark A.G."/>
            <person name="Waterman M.S."/>
            <person name="Eichler E.E."/>
            <person name="Adams M.D."/>
            <person name="Hunkapiller M.W."/>
            <person name="Myers E.W."/>
            <person name="Venter J.C."/>
        </authorList>
    </citation>
    <scope>NUCLEOTIDE SEQUENCE [LARGE SCALE GENOMIC DNA]</scope>
</reference>
<reference key="3">
    <citation type="journal article" date="2004" name="Genome Res.">
        <title>The status, quality, and expansion of the NIH full-length cDNA project: the Mammalian Gene Collection (MGC).</title>
        <authorList>
            <consortium name="The MGC Project Team"/>
        </authorList>
    </citation>
    <scope>NUCLEOTIDE SEQUENCE [LARGE SCALE MRNA]</scope>
    <source>
        <tissue>Testis</tissue>
    </source>
</reference>
<reference key="4">
    <citation type="journal article" date="2004" name="Biol. Reprod.">
        <title>Molecular characterization of heat shock-like factor encoded on the human Y chromosome, and implications for male infertility.</title>
        <authorList>
            <person name="Shinka T."/>
            <person name="Sato Y."/>
            <person name="Chen G."/>
            <person name="Naroda T."/>
            <person name="Kinoshita K."/>
            <person name="Unemi Y."/>
            <person name="Tsuji K."/>
            <person name="Toida K."/>
            <person name="Iwamoto T."/>
            <person name="Nakahori Y."/>
        </authorList>
    </citation>
    <scope>TISSUE SPECIFICITY</scope>
    <scope>SUBCELLULAR LOCATION</scope>
</reference>
<reference key="5">
    <citation type="journal article" date="2010" name="J. Biol. Chem.">
        <title>In vivo identification of sumoylation sites by a signature tag and cysteine-targeted affinity purification.</title>
        <authorList>
            <person name="Blomster H.A."/>
            <person name="Imanishi S.Y."/>
            <person name="Siimes J."/>
            <person name="Kastu J."/>
            <person name="Morrice N.A."/>
            <person name="Eriksson J.E."/>
            <person name="Sistonen L."/>
        </authorList>
    </citation>
    <scope>SUMOYLATION AT LYS-215</scope>
    <source>
        <tissue>Cervix carcinoma</tissue>
    </source>
</reference>